<proteinExistence type="inferred from homology"/>
<accession>Q68WD1</accession>
<comment type="similarity">
    <text evidence="1">Belongs to the bacterial ribosomal protein bL35 family.</text>
</comment>
<dbReference type="EMBL" id="AE017197">
    <property type="protein sequence ID" value="AAU04061.1"/>
    <property type="molecule type" value="Genomic_DNA"/>
</dbReference>
<dbReference type="RefSeq" id="WP_011191042.1">
    <property type="nucleotide sequence ID" value="NC_006142.1"/>
</dbReference>
<dbReference type="SMR" id="Q68WD1"/>
<dbReference type="KEGG" id="rty:RT0596"/>
<dbReference type="eggNOG" id="COG0291">
    <property type="taxonomic scope" value="Bacteria"/>
</dbReference>
<dbReference type="HOGENOM" id="CLU_169643_2_1_5"/>
<dbReference type="OrthoDB" id="9804851at2"/>
<dbReference type="Proteomes" id="UP000000604">
    <property type="component" value="Chromosome"/>
</dbReference>
<dbReference type="GO" id="GO:0022625">
    <property type="term" value="C:cytosolic large ribosomal subunit"/>
    <property type="evidence" value="ECO:0007669"/>
    <property type="project" value="TreeGrafter"/>
</dbReference>
<dbReference type="GO" id="GO:0003735">
    <property type="term" value="F:structural constituent of ribosome"/>
    <property type="evidence" value="ECO:0007669"/>
    <property type="project" value="InterPro"/>
</dbReference>
<dbReference type="GO" id="GO:0006412">
    <property type="term" value="P:translation"/>
    <property type="evidence" value="ECO:0007669"/>
    <property type="project" value="UniProtKB-UniRule"/>
</dbReference>
<dbReference type="FunFam" id="4.10.410.60:FF:000001">
    <property type="entry name" value="50S ribosomal protein L35"/>
    <property type="match status" value="1"/>
</dbReference>
<dbReference type="Gene3D" id="4.10.410.60">
    <property type="match status" value="1"/>
</dbReference>
<dbReference type="HAMAP" id="MF_00514">
    <property type="entry name" value="Ribosomal_bL35"/>
    <property type="match status" value="1"/>
</dbReference>
<dbReference type="InterPro" id="IPR001706">
    <property type="entry name" value="Ribosomal_bL35"/>
</dbReference>
<dbReference type="InterPro" id="IPR021137">
    <property type="entry name" value="Ribosomal_bL35-like"/>
</dbReference>
<dbReference type="InterPro" id="IPR018265">
    <property type="entry name" value="Ribosomal_bL35_CS"/>
</dbReference>
<dbReference type="InterPro" id="IPR037229">
    <property type="entry name" value="Ribosomal_bL35_sf"/>
</dbReference>
<dbReference type="NCBIfam" id="TIGR00001">
    <property type="entry name" value="rpmI_bact"/>
    <property type="match status" value="1"/>
</dbReference>
<dbReference type="PANTHER" id="PTHR33343">
    <property type="entry name" value="54S RIBOSOMAL PROTEIN BL35M"/>
    <property type="match status" value="1"/>
</dbReference>
<dbReference type="PANTHER" id="PTHR33343:SF1">
    <property type="entry name" value="LARGE RIBOSOMAL SUBUNIT PROTEIN BL35M"/>
    <property type="match status" value="1"/>
</dbReference>
<dbReference type="Pfam" id="PF01632">
    <property type="entry name" value="Ribosomal_L35p"/>
    <property type="match status" value="1"/>
</dbReference>
<dbReference type="PRINTS" id="PR00064">
    <property type="entry name" value="RIBOSOMALL35"/>
</dbReference>
<dbReference type="SUPFAM" id="SSF143034">
    <property type="entry name" value="L35p-like"/>
    <property type="match status" value="1"/>
</dbReference>
<dbReference type="PROSITE" id="PS00936">
    <property type="entry name" value="RIBOSOMAL_L35"/>
    <property type="match status" value="1"/>
</dbReference>
<gene>
    <name evidence="1" type="primary">rpmI</name>
    <name type="ordered locus">RT0596</name>
</gene>
<sequence>MPKLKTKSAVKKRFKFTATGKVIASQAGKKHFMRRRTKAQIRNLRGTTILCPQDGYNIKKYFLPYGIN</sequence>
<evidence type="ECO:0000255" key="1">
    <source>
        <dbReference type="HAMAP-Rule" id="MF_00514"/>
    </source>
</evidence>
<evidence type="ECO:0000305" key="2"/>
<keyword id="KW-0687">Ribonucleoprotein</keyword>
<keyword id="KW-0689">Ribosomal protein</keyword>
<name>RL35_RICTY</name>
<feature type="chain" id="PRO_0000258744" description="Large ribosomal subunit protein bL35">
    <location>
        <begin position="1"/>
        <end position="68"/>
    </location>
</feature>
<organism>
    <name type="scientific">Rickettsia typhi (strain ATCC VR-144 / Wilmington)</name>
    <dbReference type="NCBI Taxonomy" id="257363"/>
    <lineage>
        <taxon>Bacteria</taxon>
        <taxon>Pseudomonadati</taxon>
        <taxon>Pseudomonadota</taxon>
        <taxon>Alphaproteobacteria</taxon>
        <taxon>Rickettsiales</taxon>
        <taxon>Rickettsiaceae</taxon>
        <taxon>Rickettsieae</taxon>
        <taxon>Rickettsia</taxon>
        <taxon>typhus group</taxon>
    </lineage>
</organism>
<protein>
    <recommendedName>
        <fullName evidence="1">Large ribosomal subunit protein bL35</fullName>
    </recommendedName>
    <alternativeName>
        <fullName evidence="2">50S ribosomal protein L35</fullName>
    </alternativeName>
</protein>
<reference key="1">
    <citation type="journal article" date="2004" name="J. Bacteriol.">
        <title>Complete genome sequence of Rickettsia typhi and comparison with sequences of other Rickettsiae.</title>
        <authorList>
            <person name="McLeod M.P."/>
            <person name="Qin X."/>
            <person name="Karpathy S.E."/>
            <person name="Gioia J."/>
            <person name="Highlander S.K."/>
            <person name="Fox G.E."/>
            <person name="McNeill T.Z."/>
            <person name="Jiang H."/>
            <person name="Muzny D."/>
            <person name="Jacob L.S."/>
            <person name="Hawes A.C."/>
            <person name="Sodergren E."/>
            <person name="Gill R."/>
            <person name="Hume J."/>
            <person name="Morgan M."/>
            <person name="Fan G."/>
            <person name="Amin A.G."/>
            <person name="Gibbs R.A."/>
            <person name="Hong C."/>
            <person name="Yu X.-J."/>
            <person name="Walker D.H."/>
            <person name="Weinstock G.M."/>
        </authorList>
    </citation>
    <scope>NUCLEOTIDE SEQUENCE [LARGE SCALE GENOMIC DNA]</scope>
    <source>
        <strain>ATCC VR-144 / Wilmington</strain>
    </source>
</reference>